<keyword id="KW-1003">Cell membrane</keyword>
<keyword id="KW-0966">Cell projection</keyword>
<keyword id="KW-0967">Endosome</keyword>
<keyword id="KW-0378">Hydrolase</keyword>
<keyword id="KW-0449">Lipoprotein</keyword>
<keyword id="KW-0472">Membrane</keyword>
<keyword id="KW-0564">Palmitate</keyword>
<keyword id="KW-0628">Postsynaptic cell membrane</keyword>
<keyword id="KW-1185">Reference proteome</keyword>
<keyword id="KW-0770">Synapse</keyword>
<organism>
    <name type="scientific">Xenopus tropicalis</name>
    <name type="common">Western clawed frog</name>
    <name type="synonym">Silurana tropicalis</name>
    <dbReference type="NCBI Taxonomy" id="8364"/>
    <lineage>
        <taxon>Eukaryota</taxon>
        <taxon>Metazoa</taxon>
        <taxon>Chordata</taxon>
        <taxon>Craniata</taxon>
        <taxon>Vertebrata</taxon>
        <taxon>Euteleostomi</taxon>
        <taxon>Amphibia</taxon>
        <taxon>Batrachia</taxon>
        <taxon>Anura</taxon>
        <taxon>Pipoidea</taxon>
        <taxon>Pipidae</taxon>
        <taxon>Xenopodinae</taxon>
        <taxon>Xenopus</taxon>
        <taxon>Silurana</taxon>
    </lineage>
</organism>
<reference key="1">
    <citation type="submission" date="2004-06" db="EMBL/GenBank/DDBJ databases">
        <authorList>
            <consortium name="NIH - Xenopus Gene Collection (XGC) project"/>
        </authorList>
    </citation>
    <scope>NUCLEOTIDE SEQUENCE [LARGE SCALE MRNA]</scope>
    <source>
        <tissue>Embryo</tissue>
    </source>
</reference>
<proteinExistence type="evidence at transcript level"/>
<gene>
    <name evidence="3" type="primary">abhd17c</name>
</gene>
<accession>Q6GL10</accession>
<protein>
    <recommendedName>
        <fullName evidence="7">Alpha/beta hydrolase domain-containing protein 17C</fullName>
        <shortName evidence="3">Abhydrolase domain-containing protein 17C</shortName>
        <ecNumber evidence="5">3.1.2.22</ecNumber>
    </recommendedName>
</protein>
<dbReference type="EC" id="3.1.2.22" evidence="5"/>
<dbReference type="EMBL" id="BC074709">
    <property type="protein sequence ID" value="AAH74709.1"/>
    <property type="molecule type" value="mRNA"/>
</dbReference>
<dbReference type="RefSeq" id="NP_001004867.1">
    <property type="nucleotide sequence ID" value="NM_001004867.1"/>
</dbReference>
<dbReference type="SMR" id="Q6GL10"/>
<dbReference type="FunCoup" id="Q6GL10">
    <property type="interactions" value="153"/>
</dbReference>
<dbReference type="ESTHER" id="xentr-q6gl10">
    <property type="family name" value="ABHD17-depalmitoylase"/>
</dbReference>
<dbReference type="MEROPS" id="S09.053"/>
<dbReference type="PaxDb" id="8364-ENSXETP00000004138"/>
<dbReference type="DNASU" id="448170"/>
<dbReference type="GeneID" id="448170"/>
<dbReference type="KEGG" id="xtr:448170"/>
<dbReference type="AGR" id="Xenbase:XB-GENE-6040893"/>
<dbReference type="CTD" id="58489"/>
<dbReference type="Xenbase" id="XB-GENE-6040893">
    <property type="gene designation" value="abhd17c"/>
</dbReference>
<dbReference type="eggNOG" id="KOG1552">
    <property type="taxonomic scope" value="Eukaryota"/>
</dbReference>
<dbReference type="InParanoid" id="Q6GL10"/>
<dbReference type="OMA" id="YSEREKX"/>
<dbReference type="OrthoDB" id="446723at2759"/>
<dbReference type="PhylomeDB" id="Q6GL10"/>
<dbReference type="TreeFam" id="TF314365"/>
<dbReference type="Reactome" id="R-XTR-9648002">
    <property type="pathway name" value="RAS processing"/>
</dbReference>
<dbReference type="Proteomes" id="UP000008143">
    <property type="component" value="Chromosome 3"/>
</dbReference>
<dbReference type="Bgee" id="ENSXETG00000027627">
    <property type="expression patterns" value="Expressed in 2-cell stage embryo and 13 other cell types or tissues"/>
</dbReference>
<dbReference type="GO" id="GO:0043197">
    <property type="term" value="C:dendritic spine"/>
    <property type="evidence" value="ECO:0007669"/>
    <property type="project" value="UniProtKB-SubCell"/>
</dbReference>
<dbReference type="GO" id="GO:0098839">
    <property type="term" value="C:postsynaptic density membrane"/>
    <property type="evidence" value="ECO:0007669"/>
    <property type="project" value="UniProtKB-SubCell"/>
</dbReference>
<dbReference type="GO" id="GO:0055038">
    <property type="term" value="C:recycling endosome membrane"/>
    <property type="evidence" value="ECO:0007669"/>
    <property type="project" value="UniProtKB-SubCell"/>
</dbReference>
<dbReference type="GO" id="GO:0008474">
    <property type="term" value="F:palmitoyl-(protein) hydrolase activity"/>
    <property type="evidence" value="ECO:0007669"/>
    <property type="project" value="UniProtKB-EC"/>
</dbReference>
<dbReference type="FunFam" id="3.40.50.1820:FF:000008">
    <property type="entry name" value="Alpha/beta hydrolase domain-containing protein 17B"/>
    <property type="match status" value="1"/>
</dbReference>
<dbReference type="Gene3D" id="3.40.50.1820">
    <property type="entry name" value="alpha/beta hydrolase"/>
    <property type="match status" value="1"/>
</dbReference>
<dbReference type="InterPro" id="IPR029058">
    <property type="entry name" value="AB_hydrolase_fold"/>
</dbReference>
<dbReference type="InterPro" id="IPR022742">
    <property type="entry name" value="Hydrolase_4"/>
</dbReference>
<dbReference type="PANTHER" id="PTHR12277">
    <property type="entry name" value="ALPHA/BETA HYDROLASE DOMAIN-CONTAINING PROTEIN"/>
    <property type="match status" value="1"/>
</dbReference>
<dbReference type="PANTHER" id="PTHR12277:SF55">
    <property type="entry name" value="ALPHA_BETA HYDROLASE DOMAIN-CONTAINING PROTEIN 17C"/>
    <property type="match status" value="1"/>
</dbReference>
<dbReference type="Pfam" id="PF12146">
    <property type="entry name" value="Hydrolase_4"/>
    <property type="match status" value="1"/>
</dbReference>
<dbReference type="SUPFAM" id="SSF53474">
    <property type="entry name" value="alpha/beta-Hydrolases"/>
    <property type="match status" value="1"/>
</dbReference>
<evidence type="ECO:0000250" key="1">
    <source>
        <dbReference type="UniProtKB" id="B5DFK7"/>
    </source>
</evidence>
<evidence type="ECO:0000250" key="2">
    <source>
        <dbReference type="UniProtKB" id="O75608"/>
    </source>
</evidence>
<evidence type="ECO:0000250" key="3">
    <source>
        <dbReference type="UniProtKB" id="Q6PCB6"/>
    </source>
</evidence>
<evidence type="ECO:0000250" key="4">
    <source>
        <dbReference type="UniProtKB" id="Q7M759"/>
    </source>
</evidence>
<evidence type="ECO:0000250" key="5">
    <source>
        <dbReference type="UniProtKB" id="Q8VCV1"/>
    </source>
</evidence>
<evidence type="ECO:0000250" key="6">
    <source>
        <dbReference type="UniProtKB" id="Q96GS6"/>
    </source>
</evidence>
<evidence type="ECO:0000305" key="7"/>
<name>AB17C_XENTR</name>
<feature type="chain" id="PRO_0000297518" description="Alpha/beta hydrolase domain-containing protein 17C">
    <location>
        <begin position="1"/>
        <end position="310"/>
    </location>
</feature>
<feature type="active site" description="Charge relay system" evidence="6">
    <location>
        <position position="192"/>
    </location>
</feature>
<feature type="active site" description="Charge relay system" evidence="2">
    <location>
        <position position="257"/>
    </location>
</feature>
<feature type="active site" description="Charge relay system" evidence="2">
    <location>
        <position position="286"/>
    </location>
</feature>
<comment type="function">
    <text evidence="3">Hydrolyzes fatty acids from S-acylated cysteine residues in proteins.</text>
</comment>
<comment type="catalytic activity">
    <reaction evidence="3">
        <text>S-hexadecanoyl-L-cysteinyl-[protein] + H2O = L-cysteinyl-[protein] + hexadecanoate + H(+)</text>
        <dbReference type="Rhea" id="RHEA:19233"/>
        <dbReference type="Rhea" id="RHEA-COMP:10131"/>
        <dbReference type="Rhea" id="RHEA-COMP:11032"/>
        <dbReference type="ChEBI" id="CHEBI:7896"/>
        <dbReference type="ChEBI" id="CHEBI:15377"/>
        <dbReference type="ChEBI" id="CHEBI:15378"/>
        <dbReference type="ChEBI" id="CHEBI:29950"/>
        <dbReference type="ChEBI" id="CHEBI:74151"/>
        <dbReference type="EC" id="3.1.2.22"/>
    </reaction>
</comment>
<comment type="subcellular location">
    <subcellularLocation>
        <location evidence="1">Recycling endosome membrane</location>
        <topology evidence="1">Lipid-anchor</topology>
        <orientation evidence="1">Cytoplasmic side</orientation>
    </subcellularLocation>
    <subcellularLocation>
        <location evidence="1">Cell projection</location>
        <location evidence="1">Dendritic spine</location>
    </subcellularLocation>
    <subcellularLocation>
        <location evidence="1">Postsynaptic density membrane</location>
    </subcellularLocation>
</comment>
<comment type="PTM">
    <text evidence="4">Palmitoylated on cysteine residues located in a cysteine cluster at the N-terminus which promotes membrane localization.</text>
</comment>
<comment type="similarity">
    <text evidence="7">Belongs to the AB hydrolase superfamily. ABHD17 family.</text>
</comment>
<sequence length="310" mass="34531">MPEQGPRMNGFSLGELCWLFCCPPCPSRIAAKLAFLPPEPTYTVREMEAPAGTAQPPREEGSGEPAACSLHLSERADWQYSQRELDAVEVFRWRTERGSCLGCMFVRCSPGSRYTVLFSHGNAVDLGQMCSFYIGLGTRINCNIFSYDYSGYGVSSGKPSEKNLYADIEAAWHALRTRYGVTPENIILYGQSIGTVPTVDLASRYECAAVILHSPLMSGLRVAFPDTRKTYCFDAFPSIDKISKVTSPVLIIHGTEDEVIDFSHGLAMYERCPRAVEPLWVEGAGHNDIELYAQYLERLKQFISHELPNS</sequence>